<dbReference type="EMBL" id="DS995906">
    <property type="protein sequence ID" value="EEA18938.1"/>
    <property type="molecule type" value="Genomic_DNA"/>
</dbReference>
<dbReference type="RefSeq" id="XP_002153323.1">
    <property type="nucleotide sequence ID" value="XM_002153287.1"/>
</dbReference>
<dbReference type="SMR" id="B6QVD3"/>
<dbReference type="STRING" id="441960.B6QVD3"/>
<dbReference type="VEuPathDB" id="FungiDB:PMAA_012100"/>
<dbReference type="HOGENOM" id="CLU_048802_0_0_1"/>
<dbReference type="OrthoDB" id="14965at28568"/>
<dbReference type="PhylomeDB" id="B6QVD3"/>
<dbReference type="Proteomes" id="UP000001294">
    <property type="component" value="Unassembled WGS sequence"/>
</dbReference>
<dbReference type="GO" id="GO:0030686">
    <property type="term" value="C:90S preribosome"/>
    <property type="evidence" value="ECO:0007669"/>
    <property type="project" value="TreeGrafter"/>
</dbReference>
<dbReference type="GO" id="GO:0005730">
    <property type="term" value="C:nucleolus"/>
    <property type="evidence" value="ECO:0007669"/>
    <property type="project" value="UniProtKB-SubCell"/>
</dbReference>
<dbReference type="GO" id="GO:0000462">
    <property type="term" value="P:maturation of SSU-rRNA from tricistronic rRNA transcript (SSU-rRNA, 5.8S rRNA, LSU-rRNA)"/>
    <property type="evidence" value="ECO:0007669"/>
    <property type="project" value="TreeGrafter"/>
</dbReference>
<dbReference type="InterPro" id="IPR009292">
    <property type="entry name" value="RRP36"/>
</dbReference>
<dbReference type="PANTHER" id="PTHR21738">
    <property type="entry name" value="RIBOSOMAL RNA PROCESSING PROTEIN 36 HOMOLOG"/>
    <property type="match status" value="1"/>
</dbReference>
<dbReference type="PANTHER" id="PTHR21738:SF0">
    <property type="entry name" value="RIBOSOMAL RNA PROCESSING PROTEIN 36 HOMOLOG"/>
    <property type="match status" value="1"/>
</dbReference>
<dbReference type="Pfam" id="PF06102">
    <property type="entry name" value="RRP36"/>
    <property type="match status" value="1"/>
</dbReference>
<comment type="function">
    <text evidence="1">Component of the 90S pre-ribosome involved in the maturation of rRNAs. Required for early cleavages of the pre-RNAs in the 40S ribosomal subunit maturation pathway (By similarity).</text>
</comment>
<comment type="subunit">
    <text evidence="1">Associates with 90S and pre-40S pre-ribosomal particles.</text>
</comment>
<comment type="subcellular location">
    <subcellularLocation>
        <location evidence="1">Nucleus</location>
        <location evidence="1">Nucleolus</location>
    </subcellularLocation>
</comment>
<comment type="similarity">
    <text evidence="4">Belongs to the RRP36 family.</text>
</comment>
<name>RRP36_TALMQ</name>
<accession>B6QVD3</accession>
<keyword id="KW-0175">Coiled coil</keyword>
<keyword id="KW-0539">Nucleus</keyword>
<keyword id="KW-1185">Reference proteome</keyword>
<keyword id="KW-0687">Ribonucleoprotein</keyword>
<keyword id="KW-0690">Ribosome biogenesis</keyword>
<keyword id="KW-0698">rRNA processing</keyword>
<evidence type="ECO:0000250" key="1"/>
<evidence type="ECO:0000255" key="2"/>
<evidence type="ECO:0000256" key="3">
    <source>
        <dbReference type="SAM" id="MobiDB-lite"/>
    </source>
</evidence>
<evidence type="ECO:0000305" key="4"/>
<protein>
    <recommendedName>
        <fullName>rRNA biogenesis protein rrp36</fullName>
    </recommendedName>
    <alternativeName>
        <fullName>Ribosomal RNA-processing protein 36</fullName>
    </alternativeName>
</protein>
<reference key="1">
    <citation type="journal article" date="2015" name="Genome Announc.">
        <title>Genome sequence of the AIDS-associated pathogen Penicillium marneffei (ATCC18224) and its near taxonomic relative Talaromyces stipitatus (ATCC10500).</title>
        <authorList>
            <person name="Nierman W.C."/>
            <person name="Fedorova-Abrams N.D."/>
            <person name="Andrianopoulos A."/>
        </authorList>
    </citation>
    <scope>NUCLEOTIDE SEQUENCE [LARGE SCALE GENOMIC DNA]</scope>
    <source>
        <strain>ATCC 18224 / CBS 334.59 / QM 7333</strain>
    </source>
</reference>
<feature type="chain" id="PRO_0000397648" description="rRNA biogenesis protein rrp36">
    <location>
        <begin position="1"/>
        <end position="357"/>
    </location>
</feature>
<feature type="region of interest" description="Disordered" evidence="3">
    <location>
        <begin position="1"/>
        <end position="229"/>
    </location>
</feature>
<feature type="region of interest" description="Disordered" evidence="3">
    <location>
        <begin position="269"/>
        <end position="300"/>
    </location>
</feature>
<feature type="region of interest" description="Disordered" evidence="3">
    <location>
        <begin position="320"/>
        <end position="357"/>
    </location>
</feature>
<feature type="coiled-coil region" evidence="2">
    <location>
        <begin position="238"/>
        <end position="348"/>
    </location>
</feature>
<feature type="compositionally biased region" description="Acidic residues" evidence="3">
    <location>
        <begin position="17"/>
        <end position="37"/>
    </location>
</feature>
<feature type="compositionally biased region" description="Acidic residues" evidence="3">
    <location>
        <begin position="45"/>
        <end position="75"/>
    </location>
</feature>
<feature type="compositionally biased region" description="Basic and acidic residues" evidence="3">
    <location>
        <begin position="115"/>
        <end position="147"/>
    </location>
</feature>
<feature type="compositionally biased region" description="Low complexity" evidence="3">
    <location>
        <begin position="152"/>
        <end position="164"/>
    </location>
</feature>
<feature type="compositionally biased region" description="Basic residues" evidence="3">
    <location>
        <begin position="168"/>
        <end position="178"/>
    </location>
</feature>
<feature type="compositionally biased region" description="Low complexity" evidence="3">
    <location>
        <begin position="213"/>
        <end position="226"/>
    </location>
</feature>
<feature type="compositionally biased region" description="Basic and acidic residues" evidence="3">
    <location>
        <begin position="270"/>
        <end position="300"/>
    </location>
</feature>
<feature type="compositionally biased region" description="Basic and acidic residues" evidence="3">
    <location>
        <begin position="320"/>
        <end position="333"/>
    </location>
</feature>
<feature type="compositionally biased region" description="Basic and acidic residues" evidence="3">
    <location>
        <begin position="341"/>
        <end position="357"/>
    </location>
</feature>
<proteinExistence type="inferred from homology"/>
<organism>
    <name type="scientific">Talaromyces marneffei (strain ATCC 18224 / CBS 334.59 / QM 7333)</name>
    <name type="common">Penicillium marneffei</name>
    <dbReference type="NCBI Taxonomy" id="441960"/>
    <lineage>
        <taxon>Eukaryota</taxon>
        <taxon>Fungi</taxon>
        <taxon>Dikarya</taxon>
        <taxon>Ascomycota</taxon>
        <taxon>Pezizomycotina</taxon>
        <taxon>Eurotiomycetes</taxon>
        <taxon>Eurotiomycetidae</taxon>
        <taxon>Eurotiales</taxon>
        <taxon>Trichocomaceae</taxon>
        <taxon>Talaromyces</taxon>
        <taxon>Talaromyces sect. Talaromyces</taxon>
    </lineage>
</organism>
<gene>
    <name type="primary">rrp36</name>
    <name type="ORF">PMAA_012100</name>
</gene>
<sequence length="357" mass="41062">MAISDALNKRLRARRDEEEEEDDFEDELLSDEMEGSEEDGRSNSDEEQEDSNSDAAESEEDDDQDDEQDGDEDLSDAQSIQSANDREAIQSEFRQISFGALAKAQNSIGKKRKRGAEDKSDTRTDDKKPSSTLDDIRERLRKAREQKLGLTNNNNNNNNQNNNNGYHSKPKPPPRSSKHAPAVQSSKVAVSRKRTIIEPTTVKSRDPRFDPTVVKSSSSVRRNNSSAENAYSFLDEYRASEIKQLKEQLSKTKDATQKEELKRAITSATDRQRALDNRKREREVLQEHKKKEKQLIKEGKKSQPYFLKKSELKREVLKKKYESMGSKERAKALERRRKKVASKEKKDLPWARRGMEN</sequence>